<dbReference type="EC" id="7.1.1.-" evidence="1"/>
<dbReference type="EMBL" id="AE017125">
    <property type="protein sequence ID" value="AAP78192.1"/>
    <property type="molecule type" value="Genomic_DNA"/>
</dbReference>
<dbReference type="RefSeq" id="WP_011116435.1">
    <property type="nucleotide sequence ID" value="NC_004917.1"/>
</dbReference>
<dbReference type="SMR" id="Q7VFT0"/>
<dbReference type="STRING" id="235279.HH_1595"/>
<dbReference type="KEGG" id="hhe:HH_1595"/>
<dbReference type="eggNOG" id="COG1143">
    <property type="taxonomic scope" value="Bacteria"/>
</dbReference>
<dbReference type="HOGENOM" id="CLU_067218_4_1_7"/>
<dbReference type="OrthoDB" id="9808559at2"/>
<dbReference type="Proteomes" id="UP000002495">
    <property type="component" value="Chromosome"/>
</dbReference>
<dbReference type="GO" id="GO:0005886">
    <property type="term" value="C:plasma membrane"/>
    <property type="evidence" value="ECO:0007669"/>
    <property type="project" value="UniProtKB-SubCell"/>
</dbReference>
<dbReference type="GO" id="GO:0051539">
    <property type="term" value="F:4 iron, 4 sulfur cluster binding"/>
    <property type="evidence" value="ECO:0007669"/>
    <property type="project" value="UniProtKB-KW"/>
</dbReference>
<dbReference type="GO" id="GO:0005506">
    <property type="term" value="F:iron ion binding"/>
    <property type="evidence" value="ECO:0007669"/>
    <property type="project" value="UniProtKB-UniRule"/>
</dbReference>
<dbReference type="GO" id="GO:0050136">
    <property type="term" value="F:NADH:ubiquinone reductase (non-electrogenic) activity"/>
    <property type="evidence" value="ECO:0007669"/>
    <property type="project" value="UniProtKB-UniRule"/>
</dbReference>
<dbReference type="GO" id="GO:0048038">
    <property type="term" value="F:quinone binding"/>
    <property type="evidence" value="ECO:0007669"/>
    <property type="project" value="UniProtKB-KW"/>
</dbReference>
<dbReference type="GO" id="GO:0009060">
    <property type="term" value="P:aerobic respiration"/>
    <property type="evidence" value="ECO:0007669"/>
    <property type="project" value="TreeGrafter"/>
</dbReference>
<dbReference type="Gene3D" id="3.30.70.3270">
    <property type="match status" value="1"/>
</dbReference>
<dbReference type="HAMAP" id="MF_01351">
    <property type="entry name" value="NDH1_NuoI"/>
    <property type="match status" value="1"/>
</dbReference>
<dbReference type="InterPro" id="IPR017896">
    <property type="entry name" value="4Fe4S_Fe-S-bd"/>
</dbReference>
<dbReference type="InterPro" id="IPR017900">
    <property type="entry name" value="4Fe4S_Fe_S_CS"/>
</dbReference>
<dbReference type="InterPro" id="IPR010226">
    <property type="entry name" value="NADH_quinone_OxRdtase_chainI"/>
</dbReference>
<dbReference type="NCBIfam" id="TIGR01971">
    <property type="entry name" value="NuoI"/>
    <property type="match status" value="1"/>
</dbReference>
<dbReference type="NCBIfam" id="NF004542">
    <property type="entry name" value="PRK05888.2-3"/>
    <property type="match status" value="1"/>
</dbReference>
<dbReference type="PANTHER" id="PTHR10849:SF20">
    <property type="entry name" value="NADH DEHYDROGENASE [UBIQUINONE] IRON-SULFUR PROTEIN 8, MITOCHONDRIAL"/>
    <property type="match status" value="1"/>
</dbReference>
<dbReference type="PANTHER" id="PTHR10849">
    <property type="entry name" value="NADH DEHYDROGENASE UBIQUINONE IRON-SULFUR PROTEIN 8, MITOCHONDRIAL"/>
    <property type="match status" value="1"/>
</dbReference>
<dbReference type="Pfam" id="PF12838">
    <property type="entry name" value="Fer4_7"/>
    <property type="match status" value="1"/>
</dbReference>
<dbReference type="SUPFAM" id="SSF46548">
    <property type="entry name" value="alpha-helical ferredoxin"/>
    <property type="match status" value="1"/>
</dbReference>
<dbReference type="PROSITE" id="PS00198">
    <property type="entry name" value="4FE4S_FER_1"/>
    <property type="match status" value="1"/>
</dbReference>
<dbReference type="PROSITE" id="PS51379">
    <property type="entry name" value="4FE4S_FER_2"/>
    <property type="match status" value="2"/>
</dbReference>
<sequence length="212" mass="23757">MKLHNDYRLLTPRINRDKQSFLARVIITLKTSFSLDLFSGLKTALGAFFSPKVTIHYPLESAPLSPRYRAIHKLQRLLESENERCIGCGLCEKICTSNCIRIITDKGEDGRKKILNYSINFGRCIYCGLCAEVCPELAIVHGDLVENASTQRAFFGFKPQLLEHKSSLLEFGGFGSISVNADERVKTTPLSYCTQDSQNMLSESAPQENTNV</sequence>
<reference key="1">
    <citation type="journal article" date="2003" name="Proc. Natl. Acad. Sci. U.S.A.">
        <title>The complete genome sequence of the carcinogenic bacterium Helicobacter hepaticus.</title>
        <authorList>
            <person name="Suerbaum S."/>
            <person name="Josenhans C."/>
            <person name="Sterzenbach T."/>
            <person name="Drescher B."/>
            <person name="Brandt P."/>
            <person name="Bell M."/>
            <person name="Droege M."/>
            <person name="Fartmann B."/>
            <person name="Fischer H.-P."/>
            <person name="Ge Z."/>
            <person name="Hoerster A."/>
            <person name="Holland R."/>
            <person name="Klein K."/>
            <person name="Koenig J."/>
            <person name="Macko L."/>
            <person name="Mendz G.L."/>
            <person name="Nyakatura G."/>
            <person name="Schauer D.B."/>
            <person name="Shen Z."/>
            <person name="Weber J."/>
            <person name="Frosch M."/>
            <person name="Fox J.G."/>
        </authorList>
    </citation>
    <scope>NUCLEOTIDE SEQUENCE [LARGE SCALE GENOMIC DNA]</scope>
    <source>
        <strain>ATCC 51449 / 3B1</strain>
    </source>
</reference>
<name>NUOI_HELHP</name>
<organism>
    <name type="scientific">Helicobacter hepaticus (strain ATCC 51449 / 3B1)</name>
    <dbReference type="NCBI Taxonomy" id="235279"/>
    <lineage>
        <taxon>Bacteria</taxon>
        <taxon>Pseudomonadati</taxon>
        <taxon>Campylobacterota</taxon>
        <taxon>Epsilonproteobacteria</taxon>
        <taxon>Campylobacterales</taxon>
        <taxon>Helicobacteraceae</taxon>
        <taxon>Helicobacter</taxon>
    </lineage>
</organism>
<comment type="function">
    <text evidence="1">NDH-1 shuttles electrons from NADH, via FMN and iron-sulfur (Fe-S) centers, to quinones in the respiratory chain. The immediate electron acceptor for the enzyme in this species is believed to be ubiquinone. Couples the redox reaction to proton translocation (for every two electrons transferred, four hydrogen ions are translocated across the cytoplasmic membrane), and thus conserves the redox energy in a proton gradient.</text>
</comment>
<comment type="catalytic activity">
    <reaction evidence="1">
        <text>a quinone + NADH + 5 H(+)(in) = a quinol + NAD(+) + 4 H(+)(out)</text>
        <dbReference type="Rhea" id="RHEA:57888"/>
        <dbReference type="ChEBI" id="CHEBI:15378"/>
        <dbReference type="ChEBI" id="CHEBI:24646"/>
        <dbReference type="ChEBI" id="CHEBI:57540"/>
        <dbReference type="ChEBI" id="CHEBI:57945"/>
        <dbReference type="ChEBI" id="CHEBI:132124"/>
    </reaction>
</comment>
<comment type="cofactor">
    <cofactor evidence="1">
        <name>[4Fe-4S] cluster</name>
        <dbReference type="ChEBI" id="CHEBI:49883"/>
    </cofactor>
    <text evidence="1">Binds 2 [4Fe-4S] clusters per subunit.</text>
</comment>
<comment type="subunit">
    <text evidence="1">NDH-1 is composed of 14 different subunits. Subunits NuoA, H, J, K, L, M, N constitute the membrane sector of the complex.</text>
</comment>
<comment type="subcellular location">
    <subcellularLocation>
        <location evidence="1">Cell inner membrane</location>
        <topology evidence="1">Peripheral membrane protein</topology>
    </subcellularLocation>
</comment>
<comment type="similarity">
    <text evidence="1">Belongs to the complex I 23 kDa subunit family.</text>
</comment>
<accession>Q7VFT0</accession>
<evidence type="ECO:0000255" key="1">
    <source>
        <dbReference type="HAMAP-Rule" id="MF_01351"/>
    </source>
</evidence>
<proteinExistence type="inferred from homology"/>
<gene>
    <name evidence="1" type="primary">nuoI</name>
    <name type="ordered locus">HH_1595</name>
</gene>
<protein>
    <recommendedName>
        <fullName evidence="1">NADH-quinone oxidoreductase subunit I</fullName>
        <ecNumber evidence="1">7.1.1.-</ecNumber>
    </recommendedName>
    <alternativeName>
        <fullName evidence="1">NADH dehydrogenase I subunit I</fullName>
    </alternativeName>
    <alternativeName>
        <fullName evidence="1">NDH-1 subunit I</fullName>
    </alternativeName>
</protein>
<keyword id="KW-0004">4Fe-4S</keyword>
<keyword id="KW-0997">Cell inner membrane</keyword>
<keyword id="KW-1003">Cell membrane</keyword>
<keyword id="KW-0408">Iron</keyword>
<keyword id="KW-0411">Iron-sulfur</keyword>
<keyword id="KW-0472">Membrane</keyword>
<keyword id="KW-0479">Metal-binding</keyword>
<keyword id="KW-0520">NAD</keyword>
<keyword id="KW-0874">Quinone</keyword>
<keyword id="KW-1185">Reference proteome</keyword>
<keyword id="KW-0677">Repeat</keyword>
<keyword id="KW-1278">Translocase</keyword>
<keyword id="KW-0830">Ubiquinone</keyword>
<feature type="chain" id="PRO_0000245711" description="NADH-quinone oxidoreductase subunit I">
    <location>
        <begin position="1"/>
        <end position="212"/>
    </location>
</feature>
<feature type="domain" description="4Fe-4S ferredoxin-type 1" evidence="1">
    <location>
        <begin position="76"/>
        <end position="105"/>
    </location>
</feature>
<feature type="domain" description="4Fe-4S ferredoxin-type 2" evidence="1">
    <location>
        <begin position="115"/>
        <end position="144"/>
    </location>
</feature>
<feature type="binding site" evidence="1">
    <location>
        <position position="85"/>
    </location>
    <ligand>
        <name>[4Fe-4S] cluster</name>
        <dbReference type="ChEBI" id="CHEBI:49883"/>
        <label>1</label>
    </ligand>
</feature>
<feature type="binding site" evidence="1">
    <location>
        <position position="88"/>
    </location>
    <ligand>
        <name>[4Fe-4S] cluster</name>
        <dbReference type="ChEBI" id="CHEBI:49883"/>
        <label>1</label>
    </ligand>
</feature>
<feature type="binding site" evidence="1">
    <location>
        <position position="91"/>
    </location>
    <ligand>
        <name>[4Fe-4S] cluster</name>
        <dbReference type="ChEBI" id="CHEBI:49883"/>
        <label>1</label>
    </ligand>
</feature>
<feature type="binding site" evidence="1">
    <location>
        <position position="95"/>
    </location>
    <ligand>
        <name>[4Fe-4S] cluster</name>
        <dbReference type="ChEBI" id="CHEBI:49883"/>
        <label>2</label>
    </ligand>
</feature>
<feature type="binding site" evidence="1">
    <location>
        <position position="124"/>
    </location>
    <ligand>
        <name>[4Fe-4S] cluster</name>
        <dbReference type="ChEBI" id="CHEBI:49883"/>
        <label>2</label>
    </ligand>
</feature>
<feature type="binding site" evidence="1">
    <location>
        <position position="127"/>
    </location>
    <ligand>
        <name>[4Fe-4S] cluster</name>
        <dbReference type="ChEBI" id="CHEBI:49883"/>
        <label>2</label>
    </ligand>
</feature>
<feature type="binding site" evidence="1">
    <location>
        <position position="130"/>
    </location>
    <ligand>
        <name>[4Fe-4S] cluster</name>
        <dbReference type="ChEBI" id="CHEBI:49883"/>
        <label>2</label>
    </ligand>
</feature>
<feature type="binding site" evidence="1">
    <location>
        <position position="134"/>
    </location>
    <ligand>
        <name>[4Fe-4S] cluster</name>
        <dbReference type="ChEBI" id="CHEBI:49883"/>
        <label>1</label>
    </ligand>
</feature>